<dbReference type="EC" id="4.4.1.21" evidence="1"/>
<dbReference type="EMBL" id="CP000950">
    <property type="protein sequence ID" value="ACA69635.1"/>
    <property type="molecule type" value="Genomic_DNA"/>
</dbReference>
<dbReference type="RefSeq" id="WP_002209453.1">
    <property type="nucleotide sequence ID" value="NZ_CP009792.1"/>
</dbReference>
<dbReference type="SMR" id="B1JJ95"/>
<dbReference type="GeneID" id="57975413"/>
<dbReference type="KEGG" id="ypy:YPK_3368"/>
<dbReference type="PATRIC" id="fig|502800.11.peg.4104"/>
<dbReference type="GO" id="GO:0005506">
    <property type="term" value="F:iron ion binding"/>
    <property type="evidence" value="ECO:0007669"/>
    <property type="project" value="InterPro"/>
</dbReference>
<dbReference type="GO" id="GO:0043768">
    <property type="term" value="F:S-ribosylhomocysteine lyase activity"/>
    <property type="evidence" value="ECO:0007669"/>
    <property type="project" value="UniProtKB-UniRule"/>
</dbReference>
<dbReference type="GO" id="GO:0009372">
    <property type="term" value="P:quorum sensing"/>
    <property type="evidence" value="ECO:0007669"/>
    <property type="project" value="UniProtKB-UniRule"/>
</dbReference>
<dbReference type="FunFam" id="3.30.1360.80:FF:000001">
    <property type="entry name" value="S-ribosylhomocysteine lyase"/>
    <property type="match status" value="1"/>
</dbReference>
<dbReference type="Gene3D" id="3.30.1360.80">
    <property type="entry name" value="S-ribosylhomocysteinase (LuxS)"/>
    <property type="match status" value="1"/>
</dbReference>
<dbReference type="HAMAP" id="MF_00091">
    <property type="entry name" value="LuxS"/>
    <property type="match status" value="1"/>
</dbReference>
<dbReference type="InterPro" id="IPR037005">
    <property type="entry name" value="LuxS_sf"/>
</dbReference>
<dbReference type="InterPro" id="IPR011249">
    <property type="entry name" value="Metalloenz_LuxS/M16"/>
</dbReference>
<dbReference type="InterPro" id="IPR003815">
    <property type="entry name" value="S-ribosylhomocysteinase"/>
</dbReference>
<dbReference type="NCBIfam" id="NF002602">
    <property type="entry name" value="PRK02260.1-2"/>
    <property type="match status" value="1"/>
</dbReference>
<dbReference type="PANTHER" id="PTHR35799">
    <property type="entry name" value="S-RIBOSYLHOMOCYSTEINE LYASE"/>
    <property type="match status" value="1"/>
</dbReference>
<dbReference type="PANTHER" id="PTHR35799:SF1">
    <property type="entry name" value="S-RIBOSYLHOMOCYSTEINE LYASE"/>
    <property type="match status" value="1"/>
</dbReference>
<dbReference type="Pfam" id="PF02664">
    <property type="entry name" value="LuxS"/>
    <property type="match status" value="1"/>
</dbReference>
<dbReference type="PIRSF" id="PIRSF006160">
    <property type="entry name" value="AI2"/>
    <property type="match status" value="1"/>
</dbReference>
<dbReference type="PRINTS" id="PR01487">
    <property type="entry name" value="LUXSPROTEIN"/>
</dbReference>
<dbReference type="SUPFAM" id="SSF63411">
    <property type="entry name" value="LuxS/MPP-like metallohydrolase"/>
    <property type="match status" value="1"/>
</dbReference>
<proteinExistence type="inferred from homology"/>
<reference key="1">
    <citation type="submission" date="2008-02" db="EMBL/GenBank/DDBJ databases">
        <title>Complete sequence of Yersinia pseudotuberculosis YPIII.</title>
        <authorList>
            <consortium name="US DOE Joint Genome Institute"/>
            <person name="Copeland A."/>
            <person name="Lucas S."/>
            <person name="Lapidus A."/>
            <person name="Glavina del Rio T."/>
            <person name="Dalin E."/>
            <person name="Tice H."/>
            <person name="Bruce D."/>
            <person name="Goodwin L."/>
            <person name="Pitluck S."/>
            <person name="Munk A.C."/>
            <person name="Brettin T."/>
            <person name="Detter J.C."/>
            <person name="Han C."/>
            <person name="Tapia R."/>
            <person name="Schmutz J."/>
            <person name="Larimer F."/>
            <person name="Land M."/>
            <person name="Hauser L."/>
            <person name="Challacombe J.F."/>
            <person name="Green L."/>
            <person name="Lindler L.E."/>
            <person name="Nikolich M.P."/>
            <person name="Richardson P."/>
        </authorList>
    </citation>
    <scope>NUCLEOTIDE SEQUENCE [LARGE SCALE GENOMIC DNA]</scope>
    <source>
        <strain>YPIII</strain>
    </source>
</reference>
<gene>
    <name evidence="1" type="primary">luxS</name>
    <name type="ordered locus">YPK_3368</name>
</gene>
<comment type="function">
    <text evidence="1">Involved in the synthesis of autoinducer 2 (AI-2) which is secreted by bacteria and is used to communicate both the cell density and the metabolic potential of the environment. The regulation of gene expression in response to changes in cell density is called quorum sensing. Catalyzes the transformation of S-ribosylhomocysteine (RHC) to homocysteine (HC) and 4,5-dihydroxy-2,3-pentadione (DPD).</text>
</comment>
<comment type="catalytic activity">
    <reaction evidence="1">
        <text>S-(5-deoxy-D-ribos-5-yl)-L-homocysteine = (S)-4,5-dihydroxypentane-2,3-dione + L-homocysteine</text>
        <dbReference type="Rhea" id="RHEA:17753"/>
        <dbReference type="ChEBI" id="CHEBI:29484"/>
        <dbReference type="ChEBI" id="CHEBI:58195"/>
        <dbReference type="ChEBI" id="CHEBI:58199"/>
        <dbReference type="EC" id="4.4.1.21"/>
    </reaction>
</comment>
<comment type="cofactor">
    <cofactor evidence="1">
        <name>Fe cation</name>
        <dbReference type="ChEBI" id="CHEBI:24875"/>
    </cofactor>
    <text evidence="1">Binds 1 Fe cation per subunit.</text>
</comment>
<comment type="subunit">
    <text evidence="1">Homodimer.</text>
</comment>
<comment type="similarity">
    <text evidence="1">Belongs to the LuxS family.</text>
</comment>
<organism>
    <name type="scientific">Yersinia pseudotuberculosis serotype O:3 (strain YPIII)</name>
    <dbReference type="NCBI Taxonomy" id="502800"/>
    <lineage>
        <taxon>Bacteria</taxon>
        <taxon>Pseudomonadati</taxon>
        <taxon>Pseudomonadota</taxon>
        <taxon>Gammaproteobacteria</taxon>
        <taxon>Enterobacterales</taxon>
        <taxon>Yersiniaceae</taxon>
        <taxon>Yersinia</taxon>
    </lineage>
</organism>
<name>LUXS_YERPY</name>
<protein>
    <recommendedName>
        <fullName evidence="1">S-ribosylhomocysteine lyase</fullName>
        <ecNumber evidence="1">4.4.1.21</ecNumber>
    </recommendedName>
    <alternativeName>
        <fullName evidence="1">AI-2 synthesis protein</fullName>
    </alternativeName>
    <alternativeName>
        <fullName evidence="1">Autoinducer-2 production protein LuxS</fullName>
    </alternativeName>
</protein>
<feature type="chain" id="PRO_1000093337" description="S-ribosylhomocysteine lyase">
    <location>
        <begin position="1"/>
        <end position="171"/>
    </location>
</feature>
<feature type="binding site" evidence="1">
    <location>
        <position position="54"/>
    </location>
    <ligand>
        <name>Fe cation</name>
        <dbReference type="ChEBI" id="CHEBI:24875"/>
    </ligand>
</feature>
<feature type="binding site" evidence="1">
    <location>
        <position position="58"/>
    </location>
    <ligand>
        <name>Fe cation</name>
        <dbReference type="ChEBI" id="CHEBI:24875"/>
    </ligand>
</feature>
<feature type="binding site" evidence="1">
    <location>
        <position position="128"/>
    </location>
    <ligand>
        <name>Fe cation</name>
        <dbReference type="ChEBI" id="CHEBI:24875"/>
    </ligand>
</feature>
<evidence type="ECO:0000255" key="1">
    <source>
        <dbReference type="HAMAP-Rule" id="MF_00091"/>
    </source>
</evidence>
<keyword id="KW-0071">Autoinducer synthesis</keyword>
<keyword id="KW-0408">Iron</keyword>
<keyword id="KW-0456">Lyase</keyword>
<keyword id="KW-0479">Metal-binding</keyword>
<keyword id="KW-0673">Quorum sensing</keyword>
<sequence>MPLLDSFTVDHTIMKAPAVRVAKTMKTPHGDEITVFDLRFCVPNKEVMPEKGIHTLEHLFAGFMRDHLNGDGVEIIDISPMGCRTGFYMSLIGTPDEQRVADAWKAAMADVLKVTDQRKIPELNEYQCGTYHMHSLEEAQSIAKDILDRDVRINHNEELALPKEKLTELHI</sequence>
<accession>B1JJ95</accession>